<dbReference type="EMBL" id="CP001011">
    <property type="protein sequence ID" value="ACB91531.1"/>
    <property type="molecule type" value="Genomic_DNA"/>
</dbReference>
<dbReference type="RefSeq" id="WP_004087641.1">
    <property type="nucleotide sequence ID" value="NC_010577.1"/>
</dbReference>
<dbReference type="SMR" id="B2I6A7"/>
<dbReference type="GeneID" id="93903773"/>
<dbReference type="KEGG" id="xfn:XfasM23_0074"/>
<dbReference type="HOGENOM" id="CLU_077636_1_0_6"/>
<dbReference type="Proteomes" id="UP000001698">
    <property type="component" value="Chromosome"/>
</dbReference>
<dbReference type="GO" id="GO:0005737">
    <property type="term" value="C:cytoplasm"/>
    <property type="evidence" value="ECO:0007669"/>
    <property type="project" value="UniProtKB-SubCell"/>
</dbReference>
<dbReference type="GO" id="GO:0005840">
    <property type="term" value="C:ribosome"/>
    <property type="evidence" value="ECO:0007669"/>
    <property type="project" value="InterPro"/>
</dbReference>
<dbReference type="GO" id="GO:0043022">
    <property type="term" value="F:ribosome binding"/>
    <property type="evidence" value="ECO:0007669"/>
    <property type="project" value="InterPro"/>
</dbReference>
<dbReference type="GO" id="GO:0042274">
    <property type="term" value="P:ribosomal small subunit biogenesis"/>
    <property type="evidence" value="ECO:0007669"/>
    <property type="project" value="UniProtKB-UniRule"/>
</dbReference>
<dbReference type="GO" id="GO:0006364">
    <property type="term" value="P:rRNA processing"/>
    <property type="evidence" value="ECO:0007669"/>
    <property type="project" value="UniProtKB-UniRule"/>
</dbReference>
<dbReference type="Gene3D" id="2.30.30.240">
    <property type="entry name" value="PRC-barrel domain"/>
    <property type="match status" value="1"/>
</dbReference>
<dbReference type="Gene3D" id="2.40.30.60">
    <property type="entry name" value="RimM"/>
    <property type="match status" value="1"/>
</dbReference>
<dbReference type="HAMAP" id="MF_00014">
    <property type="entry name" value="Ribosome_mat_RimM"/>
    <property type="match status" value="1"/>
</dbReference>
<dbReference type="InterPro" id="IPR011033">
    <property type="entry name" value="PRC_barrel-like_sf"/>
</dbReference>
<dbReference type="InterPro" id="IPR056792">
    <property type="entry name" value="PRC_RimM"/>
</dbReference>
<dbReference type="InterPro" id="IPR011961">
    <property type="entry name" value="RimM"/>
</dbReference>
<dbReference type="InterPro" id="IPR002676">
    <property type="entry name" value="RimM_N"/>
</dbReference>
<dbReference type="InterPro" id="IPR036976">
    <property type="entry name" value="RimM_N_sf"/>
</dbReference>
<dbReference type="InterPro" id="IPR009000">
    <property type="entry name" value="Transl_B-barrel_sf"/>
</dbReference>
<dbReference type="NCBIfam" id="TIGR02273">
    <property type="entry name" value="16S_RimM"/>
    <property type="match status" value="1"/>
</dbReference>
<dbReference type="PANTHER" id="PTHR33692">
    <property type="entry name" value="RIBOSOME MATURATION FACTOR RIMM"/>
    <property type="match status" value="1"/>
</dbReference>
<dbReference type="PANTHER" id="PTHR33692:SF1">
    <property type="entry name" value="RIBOSOME MATURATION FACTOR RIMM"/>
    <property type="match status" value="1"/>
</dbReference>
<dbReference type="Pfam" id="PF24986">
    <property type="entry name" value="PRC_RimM"/>
    <property type="match status" value="1"/>
</dbReference>
<dbReference type="Pfam" id="PF01782">
    <property type="entry name" value="RimM"/>
    <property type="match status" value="1"/>
</dbReference>
<dbReference type="SUPFAM" id="SSF50346">
    <property type="entry name" value="PRC-barrel domain"/>
    <property type="match status" value="1"/>
</dbReference>
<dbReference type="SUPFAM" id="SSF50447">
    <property type="entry name" value="Translation proteins"/>
    <property type="match status" value="1"/>
</dbReference>
<accession>B2I6A7</accession>
<protein>
    <recommendedName>
        <fullName evidence="1">Ribosome maturation factor RimM</fullName>
    </recommendedName>
</protein>
<comment type="function">
    <text evidence="1">An accessory protein needed during the final step in the assembly of 30S ribosomal subunit, possibly for assembly of the head region. Essential for efficient processing of 16S rRNA. May be needed both before and after RbfA during the maturation of 16S rRNA. It has affinity for free ribosomal 30S subunits but not for 70S ribosomes.</text>
</comment>
<comment type="subunit">
    <text evidence="1">Binds ribosomal protein uS19.</text>
</comment>
<comment type="subcellular location">
    <subcellularLocation>
        <location evidence="1">Cytoplasm</location>
    </subcellularLocation>
</comment>
<comment type="domain">
    <text evidence="1">The PRC barrel domain binds ribosomal protein uS19.</text>
</comment>
<comment type="similarity">
    <text evidence="1">Belongs to the RimM family.</text>
</comment>
<proteinExistence type="inferred from homology"/>
<gene>
    <name evidence="1" type="primary">rimM</name>
    <name type="ordered locus">XfasM23_0074</name>
</gene>
<organism>
    <name type="scientific">Xylella fastidiosa (strain M23)</name>
    <dbReference type="NCBI Taxonomy" id="405441"/>
    <lineage>
        <taxon>Bacteria</taxon>
        <taxon>Pseudomonadati</taxon>
        <taxon>Pseudomonadota</taxon>
        <taxon>Gammaproteobacteria</taxon>
        <taxon>Lysobacterales</taxon>
        <taxon>Lysobacteraceae</taxon>
        <taxon>Xylella</taxon>
    </lineage>
</organism>
<keyword id="KW-0143">Chaperone</keyword>
<keyword id="KW-0963">Cytoplasm</keyword>
<keyword id="KW-0690">Ribosome biogenesis</keyword>
<keyword id="KW-0698">rRNA processing</keyword>
<name>RIMM_XYLF2</name>
<reference key="1">
    <citation type="journal article" date="2010" name="J. Bacteriol.">
        <title>Whole genome sequences of two Xylella fastidiosa strains (M12 and M23) causing almond leaf scorch disease in California.</title>
        <authorList>
            <person name="Chen J."/>
            <person name="Xie G."/>
            <person name="Han S."/>
            <person name="Chertkov O."/>
            <person name="Sims D."/>
            <person name="Civerolo E.L."/>
        </authorList>
    </citation>
    <scope>NUCLEOTIDE SEQUENCE [LARGE SCALE GENOMIC DNA]</scope>
    <source>
        <strain>M23</strain>
    </source>
</reference>
<feature type="chain" id="PRO_1000089534" description="Ribosome maturation factor RimM">
    <location>
        <begin position="1"/>
        <end position="170"/>
    </location>
</feature>
<feature type="domain" description="PRC barrel" evidence="1">
    <location>
        <begin position="97"/>
        <end position="170"/>
    </location>
</feature>
<sequence length="170" mass="19237">MKDNERRILLGRVVGGFGLRGEIKIESWTEPRDAIFRYQPWLLRSPTGTESMLNGARGYETGKRLIATFPGINDRNGVEAICGTEIYVPRSALPPPHPDEYYWVDLEGLQVHTLEGVVLGSVSHLFSNGANDVIVIHGERERLIPFVQPDYVKSVDFEAERIVVDWDPEF</sequence>
<evidence type="ECO:0000255" key="1">
    <source>
        <dbReference type="HAMAP-Rule" id="MF_00014"/>
    </source>
</evidence>